<organism>
    <name type="scientific">Solibacter usitatus (strain Ellin6076)</name>
    <dbReference type="NCBI Taxonomy" id="234267"/>
    <lineage>
        <taxon>Bacteria</taxon>
        <taxon>Pseudomonadati</taxon>
        <taxon>Acidobacteriota</taxon>
        <taxon>Terriglobia</taxon>
        <taxon>Bryobacterales</taxon>
        <taxon>Solibacteraceae</taxon>
        <taxon>Candidatus Solibacter</taxon>
    </lineage>
</organism>
<comment type="function">
    <text evidence="1">Catalyzes the conversion of dihydroorotate to orotate with fumarate as the electron acceptor.</text>
</comment>
<comment type="catalytic activity">
    <reaction>
        <text>(S)-dihydroorotate + fumarate = orotate + succinate</text>
        <dbReference type="Rhea" id="RHEA:30059"/>
        <dbReference type="ChEBI" id="CHEBI:29806"/>
        <dbReference type="ChEBI" id="CHEBI:30031"/>
        <dbReference type="ChEBI" id="CHEBI:30839"/>
        <dbReference type="ChEBI" id="CHEBI:30864"/>
        <dbReference type="EC" id="1.3.98.1"/>
    </reaction>
</comment>
<comment type="cofactor">
    <cofactor evidence="1">
        <name>FMN</name>
        <dbReference type="ChEBI" id="CHEBI:58210"/>
    </cofactor>
    <text evidence="1">Binds 1 FMN per subunit.</text>
</comment>
<comment type="pathway">
    <text>Pyrimidine metabolism; UMP biosynthesis via de novo pathway.</text>
</comment>
<comment type="subunit">
    <text evidence="1">Homodimer.</text>
</comment>
<comment type="subcellular location">
    <subcellularLocation>
        <location evidence="1">Cytoplasm</location>
    </subcellularLocation>
</comment>
<comment type="similarity">
    <text evidence="2">Belongs to the dihydroorotate dehydrogenase family. Type 1 subfamily.</text>
</comment>
<dbReference type="EC" id="1.3.98.1"/>
<dbReference type="EMBL" id="CP000473">
    <property type="protein sequence ID" value="ABJ85363.1"/>
    <property type="molecule type" value="Genomic_DNA"/>
</dbReference>
<dbReference type="SMR" id="Q01YA2"/>
<dbReference type="STRING" id="234267.Acid_4402"/>
<dbReference type="KEGG" id="sus:Acid_4402"/>
<dbReference type="eggNOG" id="COG0167">
    <property type="taxonomic scope" value="Bacteria"/>
</dbReference>
<dbReference type="HOGENOM" id="CLU_042042_0_0_0"/>
<dbReference type="InParanoid" id="Q01YA2"/>
<dbReference type="OrthoDB" id="9794954at2"/>
<dbReference type="UniPathway" id="UPA00070"/>
<dbReference type="GO" id="GO:0005737">
    <property type="term" value="C:cytoplasm"/>
    <property type="evidence" value="ECO:0007669"/>
    <property type="project" value="UniProtKB-SubCell"/>
</dbReference>
<dbReference type="GO" id="GO:1990663">
    <property type="term" value="F:dihydroorotate dehydrogenase (fumarate) activity"/>
    <property type="evidence" value="ECO:0007669"/>
    <property type="project" value="UniProtKB-EC"/>
</dbReference>
<dbReference type="GO" id="GO:0006207">
    <property type="term" value="P:'de novo' pyrimidine nucleobase biosynthetic process"/>
    <property type="evidence" value="ECO:0007669"/>
    <property type="project" value="InterPro"/>
</dbReference>
<dbReference type="GO" id="GO:0044205">
    <property type="term" value="P:'de novo' UMP biosynthetic process"/>
    <property type="evidence" value="ECO:0007669"/>
    <property type="project" value="UniProtKB-UniRule"/>
</dbReference>
<dbReference type="CDD" id="cd04740">
    <property type="entry name" value="DHOD_1B_like"/>
    <property type="match status" value="1"/>
</dbReference>
<dbReference type="FunFam" id="3.20.20.70:FF:000027">
    <property type="entry name" value="Dihydropyrimidine dehydrogenase [NADP(+)]"/>
    <property type="match status" value="1"/>
</dbReference>
<dbReference type="Gene3D" id="3.20.20.70">
    <property type="entry name" value="Aldolase class I"/>
    <property type="match status" value="1"/>
</dbReference>
<dbReference type="HAMAP" id="MF_00224">
    <property type="entry name" value="DHO_dh_type1"/>
    <property type="match status" value="1"/>
</dbReference>
<dbReference type="InterPro" id="IPR013785">
    <property type="entry name" value="Aldolase_TIM"/>
</dbReference>
<dbReference type="InterPro" id="IPR050074">
    <property type="entry name" value="DHO_dehydrogenase"/>
</dbReference>
<dbReference type="InterPro" id="IPR033888">
    <property type="entry name" value="DHOD_1B"/>
</dbReference>
<dbReference type="InterPro" id="IPR024920">
    <property type="entry name" value="Dihydroorotate_DH_1"/>
</dbReference>
<dbReference type="InterPro" id="IPR012135">
    <property type="entry name" value="Dihydroorotate_DH_1_2"/>
</dbReference>
<dbReference type="InterPro" id="IPR005720">
    <property type="entry name" value="Dihydroorotate_DH_cat"/>
</dbReference>
<dbReference type="InterPro" id="IPR001295">
    <property type="entry name" value="Dihydroorotate_DH_CS"/>
</dbReference>
<dbReference type="InterPro" id="IPR049622">
    <property type="entry name" value="Dihydroorotate_DH_I"/>
</dbReference>
<dbReference type="NCBIfam" id="NF005574">
    <property type="entry name" value="PRK07259.1"/>
    <property type="match status" value="1"/>
</dbReference>
<dbReference type="NCBIfam" id="TIGR01037">
    <property type="entry name" value="pyrD_sub1_fam"/>
    <property type="match status" value="1"/>
</dbReference>
<dbReference type="PANTHER" id="PTHR48109:SF1">
    <property type="entry name" value="DIHYDROOROTATE DEHYDROGENASE (FUMARATE)"/>
    <property type="match status" value="1"/>
</dbReference>
<dbReference type="PANTHER" id="PTHR48109">
    <property type="entry name" value="DIHYDROOROTATE DEHYDROGENASE (QUINONE), MITOCHONDRIAL-RELATED"/>
    <property type="match status" value="1"/>
</dbReference>
<dbReference type="Pfam" id="PF01180">
    <property type="entry name" value="DHO_dh"/>
    <property type="match status" value="1"/>
</dbReference>
<dbReference type="PIRSF" id="PIRSF000164">
    <property type="entry name" value="DHO_oxidase"/>
    <property type="match status" value="1"/>
</dbReference>
<dbReference type="SUPFAM" id="SSF51395">
    <property type="entry name" value="FMN-linked oxidoreductases"/>
    <property type="match status" value="1"/>
</dbReference>
<dbReference type="PROSITE" id="PS00912">
    <property type="entry name" value="DHODEHASE_2"/>
    <property type="match status" value="1"/>
</dbReference>
<evidence type="ECO:0000250" key="1"/>
<evidence type="ECO:0000305" key="2"/>
<protein>
    <recommendedName>
        <fullName>Putative dihydroorotate dehydrogenase A (fumarate)</fullName>
        <shortName>DHOD A</shortName>
        <shortName>DHODase A</shortName>
        <shortName>DHOdehase A</shortName>
        <ecNumber>1.3.98.1</ecNumber>
    </recommendedName>
</protein>
<feature type="chain" id="PRO_1000100226" description="Putative dihydroorotate dehydrogenase A (fumarate)">
    <location>
        <begin position="1"/>
        <end position="304"/>
    </location>
</feature>
<feature type="active site" description="Nucleophile">
    <location>
        <position position="131"/>
    </location>
</feature>
<feature type="binding site" evidence="1">
    <location>
        <position position="22"/>
    </location>
    <ligand>
        <name>FMN</name>
        <dbReference type="ChEBI" id="CHEBI:58210"/>
    </ligand>
</feature>
<feature type="binding site" evidence="1">
    <location>
        <begin position="46"/>
        <end position="47"/>
    </location>
    <ligand>
        <name>FMN</name>
        <dbReference type="ChEBI" id="CHEBI:58210"/>
    </ligand>
</feature>
<feature type="binding site" evidence="1">
    <location>
        <position position="46"/>
    </location>
    <ligand>
        <name>substrate</name>
    </ligand>
</feature>
<feature type="binding site" evidence="1">
    <location>
        <begin position="70"/>
        <end position="74"/>
    </location>
    <ligand>
        <name>substrate</name>
    </ligand>
</feature>
<feature type="binding site" evidence="1">
    <location>
        <position position="100"/>
    </location>
    <ligand>
        <name>FMN</name>
        <dbReference type="ChEBI" id="CHEBI:58210"/>
    </ligand>
</feature>
<feature type="binding site" evidence="1">
    <location>
        <position position="128"/>
    </location>
    <ligand>
        <name>FMN</name>
        <dbReference type="ChEBI" id="CHEBI:58210"/>
    </ligand>
</feature>
<feature type="binding site" evidence="1">
    <location>
        <position position="128"/>
    </location>
    <ligand>
        <name>substrate</name>
    </ligand>
</feature>
<feature type="binding site" evidence="1">
    <location>
        <position position="166"/>
    </location>
    <ligand>
        <name>FMN</name>
        <dbReference type="ChEBI" id="CHEBI:58210"/>
    </ligand>
</feature>
<feature type="binding site" evidence="1">
    <location>
        <position position="192"/>
    </location>
    <ligand>
        <name>FMN</name>
        <dbReference type="ChEBI" id="CHEBI:58210"/>
    </ligand>
</feature>
<feature type="binding site" evidence="1">
    <location>
        <begin position="193"/>
        <end position="194"/>
    </location>
    <ligand>
        <name>substrate</name>
    </ligand>
</feature>
<feature type="binding site" evidence="1">
    <location>
        <position position="218"/>
    </location>
    <ligand>
        <name>FMN</name>
        <dbReference type="ChEBI" id="CHEBI:58210"/>
    </ligand>
</feature>
<feature type="binding site" evidence="1">
    <location>
        <begin position="244"/>
        <end position="245"/>
    </location>
    <ligand>
        <name>FMN</name>
        <dbReference type="ChEBI" id="CHEBI:58210"/>
    </ligand>
</feature>
<feature type="binding site" evidence="1">
    <location>
        <begin position="266"/>
        <end position="267"/>
    </location>
    <ligand>
        <name>FMN</name>
        <dbReference type="ChEBI" id="CHEBI:58210"/>
    </ligand>
</feature>
<keyword id="KW-0963">Cytoplasm</keyword>
<keyword id="KW-0285">Flavoprotein</keyword>
<keyword id="KW-0288">FMN</keyword>
<keyword id="KW-0560">Oxidoreductase</keyword>
<keyword id="KW-0665">Pyrimidine biosynthesis</keyword>
<proteinExistence type="inferred from homology"/>
<gene>
    <name type="primary">pyrD</name>
    <name type="ordered locus">Acid_4402</name>
</gene>
<sequence length="304" mass="31894">MTPQLATTICGIALKNPVLAASGTFAYGVEFEKLVDLNALGGFVVKGLSREPIEGNPPPRVFESEAGMINSVGLQNIGVRAFVAEKLPALAGLRTAVFANVFGYCTEDYVEVVRVLNDHAGLAGYELNVSCPNTAHGGIYFSNDPVLLAEVVTAAKRVATRPLIVKLSPNVSAIEPLARVAEESGADALSLVNTVISLAIDARTRRPRIGAGFGGLSGPAIKPIALRFVYQAARAVRIPVIGLGGIATGEDAAEFLIAGASAVEVGTATFWDPRAPLRIAEELGKFLEREGIRKATDLVGTLKF</sequence>
<accession>Q01YA2</accession>
<reference key="1">
    <citation type="journal article" date="2009" name="Appl. Environ. Microbiol.">
        <title>Three genomes from the phylum Acidobacteria provide insight into the lifestyles of these microorganisms in soils.</title>
        <authorList>
            <person name="Ward N.L."/>
            <person name="Challacombe J.F."/>
            <person name="Janssen P.H."/>
            <person name="Henrissat B."/>
            <person name="Coutinho P.M."/>
            <person name="Wu M."/>
            <person name="Xie G."/>
            <person name="Haft D.H."/>
            <person name="Sait M."/>
            <person name="Badger J."/>
            <person name="Barabote R.D."/>
            <person name="Bradley B."/>
            <person name="Brettin T.S."/>
            <person name="Brinkac L.M."/>
            <person name="Bruce D."/>
            <person name="Creasy T."/>
            <person name="Daugherty S.C."/>
            <person name="Davidsen T.M."/>
            <person name="DeBoy R.T."/>
            <person name="Detter J.C."/>
            <person name="Dodson R.J."/>
            <person name="Durkin A.S."/>
            <person name="Ganapathy A."/>
            <person name="Gwinn-Giglio M."/>
            <person name="Han C.S."/>
            <person name="Khouri H."/>
            <person name="Kiss H."/>
            <person name="Kothari S.P."/>
            <person name="Madupu R."/>
            <person name="Nelson K.E."/>
            <person name="Nelson W.C."/>
            <person name="Paulsen I."/>
            <person name="Penn K."/>
            <person name="Ren Q."/>
            <person name="Rosovitz M.J."/>
            <person name="Selengut J.D."/>
            <person name="Shrivastava S."/>
            <person name="Sullivan S.A."/>
            <person name="Tapia R."/>
            <person name="Thompson L.S."/>
            <person name="Watkins K.L."/>
            <person name="Yang Q."/>
            <person name="Yu C."/>
            <person name="Zafar N."/>
            <person name="Zhou L."/>
            <person name="Kuske C.R."/>
        </authorList>
    </citation>
    <scope>NUCLEOTIDE SEQUENCE [LARGE SCALE GENOMIC DNA]</scope>
    <source>
        <strain>Ellin6076</strain>
    </source>
</reference>
<name>PYRDA_SOLUE</name>